<reference evidence="6 7" key="1">
    <citation type="journal article" date="2009" name="ChemBioChem">
        <title>Discovery of additional members of the tyrosine aminomutase enzyme family and the mutational analysis of CmdF.</title>
        <authorList>
            <person name="Krug D."/>
            <person name="Muller R."/>
        </authorList>
    </citation>
    <scope>NUCLEOTIDE SEQUENCE [GENOMIC DNA]</scope>
    <scope>FUNCTION</scope>
    <scope>CATALYTIC ACTIVITY</scope>
    <source>
        <strain evidence="4">Mx f65</strain>
    </source>
</reference>
<dbReference type="EC" id="5.4.3.6"/>
<dbReference type="EC" id="4.3.1.23"/>
<dbReference type="EMBL" id="FM212243">
    <property type="protein sequence ID" value="CAR79033.1"/>
    <property type="molecule type" value="Genomic_DNA"/>
</dbReference>
<dbReference type="SMR" id="B8ZV93"/>
<dbReference type="BRENDA" id="5.4.3.6">
    <property type="organism ID" value="11880"/>
</dbReference>
<dbReference type="GO" id="GO:0016841">
    <property type="term" value="F:ammonia-lyase activity"/>
    <property type="evidence" value="ECO:0000314"/>
    <property type="project" value="UniProtKB"/>
</dbReference>
<dbReference type="GO" id="GO:0050368">
    <property type="term" value="F:L-tyrosine 2,3-aminomutase activity"/>
    <property type="evidence" value="ECO:0000314"/>
    <property type="project" value="UniProtKB"/>
</dbReference>
<dbReference type="GO" id="GO:0052883">
    <property type="term" value="F:tyrosine ammonia-lyase activity"/>
    <property type="evidence" value="ECO:0007669"/>
    <property type="project" value="UniProtKB-EC"/>
</dbReference>
<dbReference type="GO" id="GO:0009403">
    <property type="term" value="P:toxin biosynthetic process"/>
    <property type="evidence" value="ECO:0000314"/>
    <property type="project" value="UniProtKB"/>
</dbReference>
<dbReference type="CDD" id="cd00332">
    <property type="entry name" value="PAL-HAL"/>
    <property type="match status" value="1"/>
</dbReference>
<dbReference type="FunFam" id="1.10.275.10:FF:000005">
    <property type="entry name" value="Histidine ammonia-lyase"/>
    <property type="match status" value="1"/>
</dbReference>
<dbReference type="FunFam" id="1.20.200.10:FF:000012">
    <property type="entry name" value="Tyrosine ammonia-lyase"/>
    <property type="match status" value="1"/>
</dbReference>
<dbReference type="Gene3D" id="1.20.200.10">
    <property type="entry name" value="Fumarase/aspartase (Central domain)"/>
    <property type="match status" value="1"/>
</dbReference>
<dbReference type="Gene3D" id="1.10.275.10">
    <property type="entry name" value="Fumarase/aspartase (N-terminal domain)"/>
    <property type="match status" value="1"/>
</dbReference>
<dbReference type="InterPro" id="IPR001106">
    <property type="entry name" value="Aromatic_Lyase"/>
</dbReference>
<dbReference type="InterPro" id="IPR024083">
    <property type="entry name" value="Fumarase/histidase_N"/>
</dbReference>
<dbReference type="InterPro" id="IPR008948">
    <property type="entry name" value="L-Aspartase-like"/>
</dbReference>
<dbReference type="InterPro" id="IPR022313">
    <property type="entry name" value="Phe/His_NH3-lyase_AS"/>
</dbReference>
<dbReference type="PANTHER" id="PTHR10362">
    <property type="entry name" value="HISTIDINE AMMONIA-LYASE"/>
    <property type="match status" value="1"/>
</dbReference>
<dbReference type="Pfam" id="PF00221">
    <property type="entry name" value="Lyase_aromatic"/>
    <property type="match status" value="1"/>
</dbReference>
<dbReference type="SUPFAM" id="SSF48557">
    <property type="entry name" value="L-aspartase-like"/>
    <property type="match status" value="1"/>
</dbReference>
<dbReference type="PROSITE" id="PS00488">
    <property type="entry name" value="PAL_HISTIDASE"/>
    <property type="match status" value="1"/>
</dbReference>
<accession>B8ZV93</accession>
<gene>
    <name evidence="7" type="primary">tam</name>
</gene>
<organism>
    <name type="scientific">Myxococcus fulvus</name>
    <dbReference type="NCBI Taxonomy" id="33"/>
    <lineage>
        <taxon>Bacteria</taxon>
        <taxon>Pseudomonadati</taxon>
        <taxon>Myxococcota</taxon>
        <taxon>Myxococcia</taxon>
        <taxon>Myxococcales</taxon>
        <taxon>Cystobacterineae</taxon>
        <taxon>Myxococcaceae</taxon>
        <taxon>Myxococcus</taxon>
    </lineage>
</organism>
<name>TAM_MYXFU</name>
<evidence type="ECO:0000250" key="1"/>
<evidence type="ECO:0000250" key="2">
    <source>
        <dbReference type="UniProtKB" id="P21310"/>
    </source>
</evidence>
<evidence type="ECO:0000255" key="3">
    <source>
        <dbReference type="PROSITE-ProRule" id="PRU10122"/>
    </source>
</evidence>
<evidence type="ECO:0000269" key="4">
    <source>
    </source>
</evidence>
<evidence type="ECO:0000303" key="5">
    <source>
    </source>
</evidence>
<evidence type="ECO:0000305" key="6"/>
<evidence type="ECO:0000312" key="7">
    <source>
        <dbReference type="EMBL" id="CAR79033.1"/>
    </source>
</evidence>
<proteinExistence type="evidence at protein level"/>
<protein>
    <recommendedName>
        <fullName evidence="5">Tyrosine 2,3-aminomutase</fullName>
        <shortName evidence="5">MfTAM</shortName>
        <ecNumber>5.4.3.6</ecNumber>
    </recommendedName>
    <alternativeName>
        <fullName evidence="5">Tyrosine ammonia-lyase</fullName>
        <ecNumber>4.3.1.23</ecNumber>
    </alternativeName>
</protein>
<sequence length="526" mass="56959">MDIYAVAVGRVGVELDAAQLERVRATHLRVQGWGMEKYPMYGVNTGFGELINVIIPPQFKSDLQHNLLRSHAAGGGEPFPDEVVRAIMTVRINCLMKGYSGISPEALQLLATMLNRGIHPVIPMQGSLGASGDLAPLSHMALPLIGDGHVRKNGVTRPTMEVFQEEGLTPLKLGFKEGLALVNGTSAMTGAASLALYRARHLLRLSLLASADIVQAMNASTRPFSHTGNALKNHPGQVVIARLMRDLTQGTGLMRDHQDIMRAISERTSHSNDVEETEIYLQNAYSLRCMPQVLGVVLETLQMCQRFIEEEANSVNDNPVILDTPAETYHGANFHGQYVAMACDYLSIAVAEMGVLAERQLNRLLDPHINKPLPGFLAHAKTGLFCGFEGGQYLATSIASENLDLAAPSSIKSIPSNGQNQDIVSMGLIAARKTLALCENVGTILSVLMAALNQASHFTEAAKYSAPIRSIHEKLGKVAPRYEDERPMSTVIAQVRGVLLQEQGLALAQSLVNLDLTPDLSLEPRA</sequence>
<keyword id="KW-0413">Isomerase</keyword>
<keyword id="KW-0456">Lyase</keyword>
<comment type="function">
    <text evidence="4">Has aminomutase and, to a much lesser extent, ammonia-lyase activity. Primarily, catalyzes the rearrangement of L-tyrosine to S-beta-tyrosine, which is probably incorporated into secondary metabolite myxovalargin. The aminomutase activity exclusively produces S-beta-tyrosine.</text>
</comment>
<comment type="catalytic activity">
    <reaction evidence="4">
        <text>L-tyrosine = 3-amino-3-(4-hydroxyphenyl)propanoate</text>
        <dbReference type="Rhea" id="RHEA:15781"/>
        <dbReference type="ChEBI" id="CHEBI:57956"/>
        <dbReference type="ChEBI" id="CHEBI:58315"/>
        <dbReference type="EC" id="5.4.3.6"/>
    </reaction>
</comment>
<comment type="catalytic activity">
    <reaction evidence="4">
        <text>L-tyrosine = (E)-4-coumarate + NH4(+)</text>
        <dbReference type="Rhea" id="RHEA:24906"/>
        <dbReference type="ChEBI" id="CHEBI:12876"/>
        <dbReference type="ChEBI" id="CHEBI:28938"/>
        <dbReference type="ChEBI" id="CHEBI:58315"/>
        <dbReference type="EC" id="4.3.1.23"/>
    </reaction>
</comment>
<comment type="subunit">
    <text evidence="1">Homotetramer; dimer of dimers.</text>
</comment>
<comment type="PTM">
    <text evidence="2">Contains an active site 4-methylidene-imidazol-5-one (MIO), which is formed autocatalytically by cyclization and dehydration of residues Ala-Ser-Gly.</text>
</comment>
<comment type="similarity">
    <text evidence="4">Belongs to the TAL/TAM family.</text>
</comment>
<feature type="chain" id="PRO_0000407376" description="Tyrosine 2,3-aminomutase">
    <location>
        <begin position="1"/>
        <end position="526"/>
    </location>
</feature>
<feature type="active site" description="Proton donor/acceptor" evidence="1">
    <location>
        <position position="41"/>
    </location>
</feature>
<feature type="binding site" evidence="1">
    <location>
        <position position="71"/>
    </location>
    <ligand>
        <name>substrate</name>
    </ligand>
</feature>
<feature type="binding site" evidence="1">
    <location>
        <position position="183"/>
    </location>
    <ligand>
        <name>substrate</name>
    </ligand>
</feature>
<feature type="binding site" evidence="1">
    <location>
        <position position="288"/>
    </location>
    <ligand>
        <name>substrate</name>
    </ligand>
</feature>
<feature type="modified residue" description="2,3-didehydroalanine (Ser)" evidence="2 3">
    <location>
        <position position="131"/>
    </location>
</feature>
<feature type="cross-link" description="5-imidazolinone (Ala-Gly)" evidence="2">
    <location>
        <begin position="130"/>
        <end position="132"/>
    </location>
</feature>